<protein>
    <recommendedName>
        <fullName>U11/U12 small nuclear ribonucleoprotein 35 kDa protein</fullName>
        <shortName>U11/U12 snRNP 35 kDa protein</shortName>
    </recommendedName>
    <alternativeName>
        <fullName>U1 snRNP-binding protein homolog</fullName>
    </alternativeName>
</protein>
<name>U1SBP_DANRE</name>
<feature type="chain" id="PRO_0000307910" description="U11/U12 small nuclear ribonucleoprotein 35 kDa protein">
    <location>
        <begin position="1"/>
        <end position="208"/>
    </location>
</feature>
<feature type="domain" description="RRM" evidence="2">
    <location>
        <begin position="50"/>
        <end position="128"/>
    </location>
</feature>
<feature type="region of interest" description="Disordered" evidence="3">
    <location>
        <begin position="133"/>
        <end position="208"/>
    </location>
</feature>
<feature type="compositionally biased region" description="Basic and acidic residues" evidence="3">
    <location>
        <begin position="171"/>
        <end position="208"/>
    </location>
</feature>
<keyword id="KW-0539">Nucleus</keyword>
<keyword id="KW-1185">Reference proteome</keyword>
<keyword id="KW-0694">RNA-binding</keyword>
<dbReference type="EMBL" id="BC098619">
    <property type="protein sequence ID" value="AAH98619.1"/>
    <property type="molecule type" value="mRNA"/>
</dbReference>
<dbReference type="RefSeq" id="NP_001025412.1">
    <property type="nucleotide sequence ID" value="NM_001030241.2"/>
</dbReference>
<dbReference type="SMR" id="Q4KMD3"/>
<dbReference type="FunCoup" id="Q4KMD3">
    <property type="interactions" value="351"/>
</dbReference>
<dbReference type="STRING" id="7955.ENSDARP00000135151"/>
<dbReference type="PaxDb" id="7955-ENSDARP00000065242"/>
<dbReference type="Ensembl" id="ENSDART00000172191">
    <property type="protein sequence ID" value="ENSDARP00000135151"/>
    <property type="gene ID" value="ENSDARG00000099913"/>
</dbReference>
<dbReference type="GeneID" id="569999"/>
<dbReference type="KEGG" id="dre:569999"/>
<dbReference type="AGR" id="ZFIN:ZDB-GENE-050706-77"/>
<dbReference type="CTD" id="11066"/>
<dbReference type="ZFIN" id="ZDB-GENE-050706-77">
    <property type="gene designation" value="snrnp35"/>
</dbReference>
<dbReference type="eggNOG" id="KOG0113">
    <property type="taxonomic scope" value="Eukaryota"/>
</dbReference>
<dbReference type="HOGENOM" id="CLU_035088_1_0_1"/>
<dbReference type="InParanoid" id="Q4KMD3"/>
<dbReference type="OMA" id="FERSRVM"/>
<dbReference type="OrthoDB" id="6159137at2759"/>
<dbReference type="PhylomeDB" id="Q4KMD3"/>
<dbReference type="TreeFam" id="TF331614"/>
<dbReference type="PRO" id="PR:Q4KMD3"/>
<dbReference type="Proteomes" id="UP000000437">
    <property type="component" value="Chromosome 10"/>
</dbReference>
<dbReference type="Bgee" id="ENSDARG00000099913">
    <property type="expression patterns" value="Expressed in mature ovarian follicle and 24 other cell types or tissues"/>
</dbReference>
<dbReference type="GO" id="GO:0005689">
    <property type="term" value="C:U12-type spliceosomal complex"/>
    <property type="evidence" value="ECO:0000318"/>
    <property type="project" value="GO_Central"/>
</dbReference>
<dbReference type="GO" id="GO:0003729">
    <property type="term" value="F:mRNA binding"/>
    <property type="evidence" value="ECO:0000318"/>
    <property type="project" value="GO_Central"/>
</dbReference>
<dbReference type="GO" id="GO:0017069">
    <property type="term" value="F:snRNA binding"/>
    <property type="evidence" value="ECO:0000318"/>
    <property type="project" value="GO_Central"/>
</dbReference>
<dbReference type="GO" id="GO:0000398">
    <property type="term" value="P:mRNA splicing, via spliceosome"/>
    <property type="evidence" value="ECO:0000318"/>
    <property type="project" value="GO_Central"/>
</dbReference>
<dbReference type="CDD" id="cd12237">
    <property type="entry name" value="RRM_snRNP35"/>
    <property type="match status" value="1"/>
</dbReference>
<dbReference type="FunFam" id="3.30.70.330:FF:000132">
    <property type="entry name" value="Small nuclear ribonucleoprotein U11/U12 subunit 35"/>
    <property type="match status" value="1"/>
</dbReference>
<dbReference type="Gene3D" id="3.30.70.330">
    <property type="match status" value="1"/>
</dbReference>
<dbReference type="InterPro" id="IPR012677">
    <property type="entry name" value="Nucleotide-bd_a/b_plait_sf"/>
</dbReference>
<dbReference type="InterPro" id="IPR035979">
    <property type="entry name" value="RBD_domain_sf"/>
</dbReference>
<dbReference type="InterPro" id="IPR000504">
    <property type="entry name" value="RRM_dom"/>
</dbReference>
<dbReference type="InterPro" id="IPR034146">
    <property type="entry name" value="snRNP35_RRM"/>
</dbReference>
<dbReference type="InterPro" id="IPR051183">
    <property type="entry name" value="U1_U11-U12_snRNP_70-35kDa"/>
</dbReference>
<dbReference type="PANTHER" id="PTHR13952">
    <property type="entry name" value="U1 SMALL NUCLEAR RIBONUCLEOPROTEIN 70 KD"/>
    <property type="match status" value="1"/>
</dbReference>
<dbReference type="PANTHER" id="PTHR13952:SF6">
    <property type="entry name" value="U11_U12 SMALL NUCLEAR RIBONUCLEOPROTEIN 35 KDA PROTEIN"/>
    <property type="match status" value="1"/>
</dbReference>
<dbReference type="Pfam" id="PF00076">
    <property type="entry name" value="RRM_1"/>
    <property type="match status" value="1"/>
</dbReference>
<dbReference type="SMART" id="SM00360">
    <property type="entry name" value="RRM"/>
    <property type="match status" value="1"/>
</dbReference>
<dbReference type="SUPFAM" id="SSF54928">
    <property type="entry name" value="RNA-binding domain, RBD"/>
    <property type="match status" value="1"/>
</dbReference>
<dbReference type="PROSITE" id="PS50102">
    <property type="entry name" value="RRM"/>
    <property type="match status" value="1"/>
</dbReference>
<reference key="1">
    <citation type="submission" date="2005-07" db="EMBL/GenBank/DDBJ databases">
        <authorList>
            <consortium name="NIH - Zebrafish Gene Collection (ZGC) project"/>
        </authorList>
    </citation>
    <scope>NUCLEOTIDE SEQUENCE [LARGE SCALE MRNA]</scope>
    <source>
        <tissue>Eye</tissue>
    </source>
</reference>
<proteinExistence type="evidence at transcript level"/>
<comment type="subcellular location">
    <subcellularLocation>
        <location evidence="1">Nucleus</location>
    </subcellularLocation>
</comment>
<accession>Q4KMD3</accession>
<gene>
    <name type="primary">snrnp35</name>
    <name type="synonym">u1snrnpbp</name>
    <name type="ORF">zgc:112337</name>
</gene>
<evidence type="ECO:0000250" key="1"/>
<evidence type="ECO:0000255" key="2">
    <source>
        <dbReference type="PROSITE-ProRule" id="PRU00176"/>
    </source>
</evidence>
<evidence type="ECO:0000256" key="3">
    <source>
        <dbReference type="SAM" id="MobiDB-lite"/>
    </source>
</evidence>
<sequence>MEWSPVAKVYDPLKAGSIDGTDVEPHDAGVWRAMLARYKPNRGVCGDPDLTLFVARLNPQTTEEKLRDVFSKFGDIRRLRLVRDVVTGFSKRYAFIEYKEERSLKRAWRDANKLILDQYELLVDVEQERTLPGWRPRRLGGGQGGQKESGQLRFGGRDRPFRKPINLSTRRPAEPRGRETERERDRRDYRDRRHERTHTEDRTHRHTY</sequence>
<organism>
    <name type="scientific">Danio rerio</name>
    <name type="common">Zebrafish</name>
    <name type="synonym">Brachydanio rerio</name>
    <dbReference type="NCBI Taxonomy" id="7955"/>
    <lineage>
        <taxon>Eukaryota</taxon>
        <taxon>Metazoa</taxon>
        <taxon>Chordata</taxon>
        <taxon>Craniata</taxon>
        <taxon>Vertebrata</taxon>
        <taxon>Euteleostomi</taxon>
        <taxon>Actinopterygii</taxon>
        <taxon>Neopterygii</taxon>
        <taxon>Teleostei</taxon>
        <taxon>Ostariophysi</taxon>
        <taxon>Cypriniformes</taxon>
        <taxon>Danionidae</taxon>
        <taxon>Danioninae</taxon>
        <taxon>Danio</taxon>
    </lineage>
</organism>